<feature type="chain" id="PRO_0000117027" description="Delta(7)-sterol 5(6)-desaturase ERG3">
    <location>
        <begin position="1"/>
        <end position="365"/>
    </location>
</feature>
<feature type="topological domain" description="Cytoplasmic" evidence="2">
    <location>
        <begin position="1"/>
        <end position="92"/>
    </location>
</feature>
<feature type="transmembrane region" description="Helical" evidence="2">
    <location>
        <begin position="93"/>
        <end position="113"/>
    </location>
</feature>
<feature type="topological domain" description="Lumenal" evidence="2">
    <location>
        <begin position="114"/>
        <end position="140"/>
    </location>
</feature>
<feature type="transmembrane region" description="Helical" evidence="2">
    <location>
        <begin position="141"/>
        <end position="161"/>
    </location>
</feature>
<feature type="topological domain" description="Cytoplasmic" evidence="2">
    <location>
        <begin position="162"/>
        <end position="242"/>
    </location>
</feature>
<feature type="transmembrane region" description="Helical" evidence="2">
    <location>
        <begin position="243"/>
        <end position="263"/>
    </location>
</feature>
<feature type="topological domain" description="Lumenal" evidence="2">
    <location>
        <begin position="264"/>
        <end position="365"/>
    </location>
</feature>
<feature type="domain" description="Fatty acid hydroxylase" evidence="2">
    <location>
        <begin position="187"/>
        <end position="311"/>
    </location>
</feature>
<feature type="short sequence motif" description="Histidine box-1" evidence="1">
    <location>
        <begin position="200"/>
        <end position="204"/>
    </location>
</feature>
<feature type="short sequence motif" description="Histidine box-2" evidence="1">
    <location>
        <begin position="213"/>
        <end position="217"/>
    </location>
</feature>
<feature type="short sequence motif" description="Histidine box-3" evidence="1">
    <location>
        <begin position="288"/>
        <end position="292"/>
    </location>
</feature>
<feature type="cross-link" description="Glycyl lysine isopeptide (Lys-Gly) (interchain with G-Cter in ubiquitin)" evidence="3">
    <location>
        <position position="324"/>
    </location>
</feature>
<feature type="cross-link" description="Glycyl lysine isopeptide (Lys-Gly) (interchain with G-Cter in ubiquitin)" evidence="3">
    <location>
        <position position="344"/>
    </location>
</feature>
<proteinExistence type="evidence at protein level"/>
<keyword id="KW-0256">Endoplasmic reticulum</keyword>
<keyword id="KW-0408">Iron</keyword>
<keyword id="KW-1017">Isopeptide bond</keyword>
<keyword id="KW-0444">Lipid biosynthesis</keyword>
<keyword id="KW-0443">Lipid metabolism</keyword>
<keyword id="KW-0472">Membrane</keyword>
<keyword id="KW-0560">Oxidoreductase</keyword>
<keyword id="KW-1185">Reference proteome</keyword>
<keyword id="KW-0752">Steroid biosynthesis</keyword>
<keyword id="KW-0753">Steroid metabolism</keyword>
<keyword id="KW-0756">Sterol biosynthesis</keyword>
<keyword id="KW-1207">Sterol metabolism</keyword>
<keyword id="KW-0812">Transmembrane</keyword>
<keyword id="KW-1133">Transmembrane helix</keyword>
<keyword id="KW-0832">Ubl conjugation</keyword>
<organism>
    <name type="scientific">Saccharomyces cerevisiae (strain ATCC 204508 / S288c)</name>
    <name type="common">Baker's yeast</name>
    <dbReference type="NCBI Taxonomy" id="559292"/>
    <lineage>
        <taxon>Eukaryota</taxon>
        <taxon>Fungi</taxon>
        <taxon>Dikarya</taxon>
        <taxon>Ascomycota</taxon>
        <taxon>Saccharomycotina</taxon>
        <taxon>Saccharomycetes</taxon>
        <taxon>Saccharomycetales</taxon>
        <taxon>Saccharomycetaceae</taxon>
        <taxon>Saccharomyces</taxon>
    </lineage>
</organism>
<sequence length="365" mass="42730">MDLVLEVADHYVLDDLYAKVLPASLAANIPVKWQKLLGLNSGFSNSTILQETLNSKNAVKECRRFYGQVPFLFDMSTTSFASLLPRSSILREFLSLWVIVTIFGLLLYLFTASLSYVFVFDKSIFNHPRYLKNQMAMEIKLAVSAIPWMSMLTVPWFVMELNGHSKLYMKIDYENHGVRKLIIEYFTFIFFTDCGVYLAHRWLHWPRVYRALHKPHHKWLVCTPFASHSFHPVDGFLQSISYHIYPLILPLHKVSYLILFTFVNFWTVMIHDGQYLSNNPAVNGTACHTVHHLYFNYNYGQFTTLWDRLGGSYRRPDDSLFDPKLRDAKETWDAQVKEVEHFIKEVEGDDNDRIYENDPNTKKNN</sequence>
<gene>
    <name evidence="9" type="primary">ERG3</name>
    <name type="synonym">PSO6</name>
    <name type="synonym">SYR1</name>
    <name type="ordered locus">YLR056W</name>
    <name type="ORF">L2150</name>
</gene>
<comment type="function">
    <text evidence="6 10">C-5 sterol desaturase; part of the third module of ergosterol biosynthesis pathway that includes the late steps of the pathway (PubMed:1864507). ERG3 catalyzes the introduction of a C-5 double bond in the B ring to produce 5-dehydroepisterol (PubMed:1864507). The third module or late pathway involves the ergosterol synthesis itself through consecutive reactions that mainly occur in the endoplasmic reticulum (ER) membrane. Firstly, the squalene synthase ERG9 catalyzes the condensation of 2 farnesyl pyrophosphate moieties to form squalene, which is the precursor of all steroids. Squalene synthase is crucial for balancing the incorporation of farnesyl diphosphate (FPP) into sterol and nonsterol isoprene synthesis. Secondly, the squalene epoxidase ERG1 catalyzes the stereospecific oxidation of squalene to (S)-2,3-epoxysqualene, which is considered to be a rate-limiting enzyme in steroid biosynthesis. Then, the lanosterol synthase ERG7 catalyzes the cyclization of (S)-2,3 oxidosqualene to lanosterol, a reaction that forms the sterol core. In the next steps, lanosterol is transformed to zymosterol through a complex process involving various demethylation, reduction and desaturation reactions. The lanosterol 14-alpha-demethylase ERG11 (also known as CYP51) catalyzes C14-demethylation of lanosterol to produce 4,4'-dimethyl cholesta-8,14,24-triene-3-beta-ol, which is critical for ergosterol biosynthesis. The C-14 reductase ERG24 reduces the C14=C15 double bond of 4,4-dimethyl-cholesta-8,14,24-trienol to produce 4,4-dimethyl-cholesta-8,24-dienol. 4,4-dimethyl-cholesta-8,24-dienol is substrate of the C-4 demethylation complex ERG25-ERG26-ERG27 in which ERG25 catalyzes the three-step monooxygenation required for the demethylation of 4,4-dimethyl and 4alpha-methylsterols, ERG26 catalyzes the oxidative decarboxylation that results in a reduction of the 3-beta-hydroxy group at the C-3 carbon to an oxo group, and ERG27 is responsible for the reduction of the keto group on the C-3. ERG28 has a role as a scaffold to help anchor ERG25, ERG26 and ERG27 to the endoplasmic reticulum and ERG29 regulates the activity of the iron-containing C4-methylsterol oxidase ERG25. Then, the sterol 24-C-methyltransferase ERG6 catalyzes the methyl transfer from S-adenosyl-methionine to the C-24 of zymosterol to form fecosterol. The C-8 sterol isomerase ERG2 catalyzes the reaction which results in unsaturation at C-7 in the B ring of sterols and thus converts fecosterol to episterol. The sterol-C5-desaturase ERG3 then catalyzes the introduction of a C-5 double bond in the B ring to produce 5-dehydroepisterol. The C-22 sterol desaturase ERG5 further converts 5-dehydroepisterol into ergosta-5,7,22,24(28)-tetraen-3beta-ol by forming the C-22(23) double bond in the sterol side chain. Finally, ergosta-5,7,22,24(28)-tetraen-3beta-ol is substrate of the C-24(28) sterol reductase ERG4 to produce ergosterol (PubMed:32679672).</text>
</comment>
<comment type="catalytic activity">
    <reaction evidence="6">
        <text>episterol + 2 Fe(II)-[cytochrome b5] + O2 + 2 H(+) = 5-dehydroepisterol + 2 Fe(III)-[cytochrome b5] + 2 H2O</text>
        <dbReference type="Rhea" id="RHEA:46560"/>
        <dbReference type="Rhea" id="RHEA-COMP:10438"/>
        <dbReference type="Rhea" id="RHEA-COMP:10439"/>
        <dbReference type="ChEBI" id="CHEBI:15377"/>
        <dbReference type="ChEBI" id="CHEBI:15378"/>
        <dbReference type="ChEBI" id="CHEBI:15379"/>
        <dbReference type="ChEBI" id="CHEBI:23929"/>
        <dbReference type="ChEBI" id="CHEBI:29033"/>
        <dbReference type="ChEBI" id="CHEBI:29034"/>
        <dbReference type="ChEBI" id="CHEBI:52972"/>
        <dbReference type="EC" id="1.14.19.20"/>
    </reaction>
    <physiologicalReaction direction="left-to-right" evidence="6">
        <dbReference type="Rhea" id="RHEA:46561"/>
    </physiologicalReaction>
</comment>
<comment type="cofactor">
    <cofactor evidence="1">
        <name>Fe cation</name>
        <dbReference type="ChEBI" id="CHEBI:24875"/>
    </cofactor>
</comment>
<comment type="pathway">
    <text evidence="6">Steroid metabolism; ergosterol biosynthesis; ergosterol from zymosterol: step 3/5.</text>
</comment>
<comment type="subunit">
    <text evidence="5">Interacts with ERG28.</text>
</comment>
<comment type="interaction">
    <interactant intactId="EBI-6554">
        <id>P32353</id>
    </interactant>
    <interactant intactId="EBI-6506">
        <id>P53045</id>
        <label>ERG25</label>
    </interactant>
    <organismsDiffer>false</organismsDiffer>
    <experiments>3</experiments>
</comment>
<comment type="subcellular location">
    <subcellularLocation>
        <location evidence="11">Endoplasmic reticulum membrane</location>
        <topology evidence="2">Multi-pass membrane protein</topology>
    </subcellularLocation>
</comment>
<comment type="induction">
    <text evidence="8">The ERG3 promoter contains 2 upstream activation sequences, UAS1 and UAS2 (PubMed:8772195). UAS1 regulates gene expression but does not affect sterol regulation (PubMed:8772195). UAS2 is required for sterol regulation (PubMed:8772195). The absence of sterol esterification leads to a decrease of ERG3 expression (PubMed:8772195).</text>
</comment>
<comment type="domain">
    <text evidence="1">The histidine box domains may contain the active site and/or be involved in metal ion binding.</text>
</comment>
<comment type="disruption phenotype">
    <text evidence="7">Abolishes the production of ergosterol (PubMed:37604855). Resistance to aescin (PubMed:37604855).</text>
</comment>
<comment type="biotechnology">
    <text evidence="7">Engineered yeast lacking this enzyme have an increased tolerance to the phamaceutical aescin (escine), and could therefore be useful in the production of aescin at industrial scale.</text>
</comment>
<comment type="miscellaneous">
    <text evidence="4">Present with 36200 molecules/cell in log phase SD medium.</text>
</comment>
<comment type="similarity">
    <text evidence="11">Belongs to the sterol desaturase family.</text>
</comment>
<accession>P32353</accession>
<accession>D6VY58</accession>
<dbReference type="EC" id="1.14.19.20" evidence="6"/>
<dbReference type="EMBL" id="M62623">
    <property type="protein sequence ID" value="AAA34594.1"/>
    <property type="molecule type" value="Genomic_DNA"/>
</dbReference>
<dbReference type="EMBL" id="S46162">
    <property type="protein sequence ID" value="AAB39844.1"/>
    <property type="molecule type" value="Genomic_DNA"/>
</dbReference>
<dbReference type="EMBL" id="M64989">
    <property type="protein sequence ID" value="AAA34595.1"/>
    <property type="molecule type" value="Genomic_DNA"/>
</dbReference>
<dbReference type="EMBL" id="D14299">
    <property type="protein sequence ID" value="BAA20292.1"/>
    <property type="molecule type" value="Genomic_DNA"/>
</dbReference>
<dbReference type="EMBL" id="X94607">
    <property type="protein sequence ID" value="CAA64303.1"/>
    <property type="molecule type" value="Genomic_DNA"/>
</dbReference>
<dbReference type="EMBL" id="Z73228">
    <property type="protein sequence ID" value="CAA97586.1"/>
    <property type="molecule type" value="Genomic_DNA"/>
</dbReference>
<dbReference type="EMBL" id="AY692996">
    <property type="protein sequence ID" value="AAT93015.1"/>
    <property type="molecule type" value="Genomic_DNA"/>
</dbReference>
<dbReference type="EMBL" id="BK006945">
    <property type="protein sequence ID" value="DAA09374.1"/>
    <property type="molecule type" value="Genomic_DNA"/>
</dbReference>
<dbReference type="PIR" id="JQ1146">
    <property type="entry name" value="JQ1146"/>
</dbReference>
<dbReference type="RefSeq" id="NP_013157.1">
    <property type="nucleotide sequence ID" value="NM_001181943.1"/>
</dbReference>
<dbReference type="SMR" id="P32353"/>
<dbReference type="BioGRID" id="31331">
    <property type="interactions" value="1144"/>
</dbReference>
<dbReference type="DIP" id="DIP-4136N"/>
<dbReference type="FunCoup" id="P32353">
    <property type="interactions" value="259"/>
</dbReference>
<dbReference type="IntAct" id="P32353">
    <property type="interactions" value="23"/>
</dbReference>
<dbReference type="MINT" id="P32353"/>
<dbReference type="STRING" id="4932.YLR056W"/>
<dbReference type="iPTMnet" id="P32353"/>
<dbReference type="PaxDb" id="4932-YLR056W"/>
<dbReference type="PeptideAtlas" id="P32353"/>
<dbReference type="EnsemblFungi" id="YLR056W_mRNA">
    <property type="protein sequence ID" value="YLR056W"/>
    <property type="gene ID" value="YLR056W"/>
</dbReference>
<dbReference type="GeneID" id="850745"/>
<dbReference type="KEGG" id="sce:YLR056W"/>
<dbReference type="AGR" id="SGD:S000004046"/>
<dbReference type="SGD" id="S000004046">
    <property type="gene designation" value="ERG3"/>
</dbReference>
<dbReference type="VEuPathDB" id="FungiDB:YLR056W"/>
<dbReference type="eggNOG" id="KOG0872">
    <property type="taxonomic scope" value="Eukaryota"/>
</dbReference>
<dbReference type="GeneTree" id="ENSGT00550000075101"/>
<dbReference type="HOGENOM" id="CLU_047036_3_0_1"/>
<dbReference type="InParanoid" id="P32353"/>
<dbReference type="OMA" id="GPGLWYN"/>
<dbReference type="OrthoDB" id="6354873at2759"/>
<dbReference type="BioCyc" id="MetaCyc:YLR056W-MONOMER"/>
<dbReference type="BioCyc" id="YEAST:YLR056W-MONOMER"/>
<dbReference type="Reactome" id="R-SCE-6807047">
    <property type="pathway name" value="Cholesterol biosynthesis via desmosterol"/>
</dbReference>
<dbReference type="Reactome" id="R-SCE-6807062">
    <property type="pathway name" value="Cholesterol biosynthesis via lathosterol"/>
</dbReference>
<dbReference type="SABIO-RK" id="P32353"/>
<dbReference type="UniPathway" id="UPA00768">
    <property type="reaction ID" value="UER00762"/>
</dbReference>
<dbReference type="BioGRID-ORCS" id="850745">
    <property type="hits" value="5 hits in 10 CRISPR screens"/>
</dbReference>
<dbReference type="PRO" id="PR:P32353"/>
<dbReference type="Proteomes" id="UP000002311">
    <property type="component" value="Chromosome XII"/>
</dbReference>
<dbReference type="RNAct" id="P32353">
    <property type="molecule type" value="protein"/>
</dbReference>
<dbReference type="GO" id="GO:0005783">
    <property type="term" value="C:endoplasmic reticulum"/>
    <property type="evidence" value="ECO:0007005"/>
    <property type="project" value="SGD"/>
</dbReference>
<dbReference type="GO" id="GO:0005788">
    <property type="term" value="C:endoplasmic reticulum lumen"/>
    <property type="evidence" value="ECO:0000314"/>
    <property type="project" value="SGD"/>
</dbReference>
<dbReference type="GO" id="GO:0005789">
    <property type="term" value="C:endoplasmic reticulum membrane"/>
    <property type="evidence" value="ECO:0007669"/>
    <property type="project" value="UniProtKB-SubCell"/>
</dbReference>
<dbReference type="GO" id="GO:0016020">
    <property type="term" value="C:membrane"/>
    <property type="evidence" value="ECO:0000318"/>
    <property type="project" value="GO_Central"/>
</dbReference>
<dbReference type="GO" id="GO:0000248">
    <property type="term" value="F:C-5 sterol desaturase activity"/>
    <property type="evidence" value="ECO:0000314"/>
    <property type="project" value="SGD"/>
</dbReference>
<dbReference type="GO" id="GO:0050046">
    <property type="term" value="F:delta7-sterol 5(6)-desaturase activity"/>
    <property type="evidence" value="ECO:0007669"/>
    <property type="project" value="UniProtKB-EC"/>
</dbReference>
<dbReference type="GO" id="GO:0005506">
    <property type="term" value="F:iron ion binding"/>
    <property type="evidence" value="ECO:0007669"/>
    <property type="project" value="InterPro"/>
</dbReference>
<dbReference type="GO" id="GO:0006696">
    <property type="term" value="P:ergosterol biosynthetic process"/>
    <property type="evidence" value="ECO:0000315"/>
    <property type="project" value="SGD"/>
</dbReference>
<dbReference type="GO" id="GO:0016126">
    <property type="term" value="P:sterol biosynthetic process"/>
    <property type="evidence" value="ECO:0000318"/>
    <property type="project" value="GO_Central"/>
</dbReference>
<dbReference type="InterPro" id="IPR006694">
    <property type="entry name" value="Fatty_acid_hydroxylase"/>
</dbReference>
<dbReference type="InterPro" id="IPR050307">
    <property type="entry name" value="Sterol_Desaturase_Related"/>
</dbReference>
<dbReference type="PANTHER" id="PTHR11863">
    <property type="entry name" value="STEROL DESATURASE"/>
    <property type="match status" value="1"/>
</dbReference>
<dbReference type="Pfam" id="PF04116">
    <property type="entry name" value="FA_hydroxylase"/>
    <property type="match status" value="1"/>
</dbReference>
<reference key="1">
    <citation type="journal article" date="1991" name="Gene">
        <title>Cloning, disruption and sequence of the gene encoding yeast C-5 sterol desaturase.</title>
        <authorList>
            <person name="Arthington B.A."/>
            <person name="Bennett L.G."/>
            <person name="Skatrud P.L."/>
            <person name="Guynn C.J."/>
            <person name="Barbuch R.J."/>
            <person name="Ulbright C.E."/>
            <person name="Bard M."/>
        </authorList>
    </citation>
    <scope>NUCLEOTIDE SEQUENCE [GENOMIC DNA]</scope>
    <scope>FUNCTION</scope>
    <scope>CATALYTIC ACTIVITY</scope>
    <scope>PATHWAY</scope>
</reference>
<reference key="2">
    <citation type="submission" date="1992-03" db="EMBL/GenBank/DDBJ databases">
        <authorList>
            <person name="Renauld G."/>
            <person name="Lacroute F."/>
            <person name="Cassart J.-P."/>
            <person name="Vandenhaute J."/>
            <person name="Delcour J."/>
        </authorList>
    </citation>
    <scope>NUCLEOTIDE SEQUENCE [GENOMIC DNA]</scope>
</reference>
<reference key="3">
    <citation type="journal article" date="1994" name="Microbiology">
        <title>Identification and analysis of the Saccharomyces cerevisiae SYR1 gene reveals that ergosterol is involved in the action of syringomycin.</title>
        <authorList>
            <person name="Taguchi N."/>
            <person name="Takano Y."/>
            <person name="Julmanop C."/>
            <person name="Wang Y."/>
            <person name="Stock S."/>
            <person name="Takemoto J.Y."/>
            <person name="Miyakawa T."/>
        </authorList>
    </citation>
    <scope>NUCLEOTIDE SEQUENCE [GENOMIC DNA]</scope>
</reference>
<reference key="4">
    <citation type="journal article" date="1997" name="Nature">
        <title>The nucleotide sequence of Saccharomyces cerevisiae chromosome XII.</title>
        <authorList>
            <person name="Johnston M."/>
            <person name="Hillier L.W."/>
            <person name="Riles L."/>
            <person name="Albermann K."/>
            <person name="Andre B."/>
            <person name="Ansorge W."/>
            <person name="Benes V."/>
            <person name="Brueckner M."/>
            <person name="Delius H."/>
            <person name="Dubois E."/>
            <person name="Duesterhoeft A."/>
            <person name="Entian K.-D."/>
            <person name="Floeth M."/>
            <person name="Goffeau A."/>
            <person name="Hebling U."/>
            <person name="Heumann K."/>
            <person name="Heuss-Neitzel D."/>
            <person name="Hilbert H."/>
            <person name="Hilger F."/>
            <person name="Kleine K."/>
            <person name="Koetter P."/>
            <person name="Louis E.J."/>
            <person name="Messenguy F."/>
            <person name="Mewes H.-W."/>
            <person name="Miosga T."/>
            <person name="Moestl D."/>
            <person name="Mueller-Auer S."/>
            <person name="Nentwich U."/>
            <person name="Obermaier B."/>
            <person name="Piravandi E."/>
            <person name="Pohl T.M."/>
            <person name="Portetelle D."/>
            <person name="Purnelle B."/>
            <person name="Rechmann S."/>
            <person name="Rieger M."/>
            <person name="Rinke M."/>
            <person name="Rose M."/>
            <person name="Scharfe M."/>
            <person name="Scherens B."/>
            <person name="Scholler P."/>
            <person name="Schwager C."/>
            <person name="Schwarz S."/>
            <person name="Underwood A.P."/>
            <person name="Urrestarazu L.A."/>
            <person name="Vandenbol M."/>
            <person name="Verhasselt P."/>
            <person name="Vierendeels F."/>
            <person name="Voet M."/>
            <person name="Volckaert G."/>
            <person name="Voss H."/>
            <person name="Wambutt R."/>
            <person name="Wedler E."/>
            <person name="Wedler H."/>
            <person name="Zimmermann F.K."/>
            <person name="Zollner A."/>
            <person name="Hani J."/>
            <person name="Hoheisel J.D."/>
        </authorList>
    </citation>
    <scope>NUCLEOTIDE SEQUENCE [LARGE SCALE GENOMIC DNA]</scope>
    <source>
        <strain>ATCC 204508 / S288c</strain>
    </source>
</reference>
<reference key="5">
    <citation type="journal article" date="2014" name="G3 (Bethesda)">
        <title>The reference genome sequence of Saccharomyces cerevisiae: Then and now.</title>
        <authorList>
            <person name="Engel S.R."/>
            <person name="Dietrich F.S."/>
            <person name="Fisk D.G."/>
            <person name="Binkley G."/>
            <person name="Balakrishnan R."/>
            <person name="Costanzo M.C."/>
            <person name="Dwight S.S."/>
            <person name="Hitz B.C."/>
            <person name="Karra K."/>
            <person name="Nash R.S."/>
            <person name="Weng S."/>
            <person name="Wong E.D."/>
            <person name="Lloyd P."/>
            <person name="Skrzypek M.S."/>
            <person name="Miyasato S.R."/>
            <person name="Simison M."/>
            <person name="Cherry J.M."/>
        </authorList>
    </citation>
    <scope>GENOME REANNOTATION</scope>
    <source>
        <strain>ATCC 204508 / S288c</strain>
    </source>
</reference>
<reference key="6">
    <citation type="journal article" date="2007" name="Genome Res.">
        <title>Approaching a complete repository of sequence-verified protein-encoding clones for Saccharomyces cerevisiae.</title>
        <authorList>
            <person name="Hu Y."/>
            <person name="Rolfs A."/>
            <person name="Bhullar B."/>
            <person name="Murthy T.V.S."/>
            <person name="Zhu C."/>
            <person name="Berger M.F."/>
            <person name="Camargo A.A."/>
            <person name="Kelley F."/>
            <person name="McCarron S."/>
            <person name="Jepson D."/>
            <person name="Richardson A."/>
            <person name="Raphael J."/>
            <person name="Moreira D."/>
            <person name="Taycher E."/>
            <person name="Zuo D."/>
            <person name="Mohr S."/>
            <person name="Kane M.F."/>
            <person name="Williamson J."/>
            <person name="Simpson A.J.G."/>
            <person name="Bulyk M.L."/>
            <person name="Harlow E."/>
            <person name="Marsischky G."/>
            <person name="Kolodner R.D."/>
            <person name="LaBaer J."/>
        </authorList>
    </citation>
    <scope>NUCLEOTIDE SEQUENCE [GENOMIC DNA]</scope>
    <source>
        <strain>ATCC 204508 / S288c</strain>
    </source>
</reference>
<reference key="7">
    <citation type="journal article" date="1996" name="FEBS Lett.">
        <title>Positive and negative regulation of a sterol biosynthetic gene (ERG3) in the post-squalene portion of the yeast ergosterol pathway.</title>
        <authorList>
            <person name="Arthington-Skaggs B.A."/>
            <person name="Crowell D.N."/>
            <person name="Yang H."/>
            <person name="Sturley S.L."/>
            <person name="Bard M."/>
        </authorList>
    </citation>
    <scope>INDUCTION</scope>
</reference>
<reference key="8">
    <citation type="journal article" date="2003" name="Nature">
        <title>Global analysis of protein expression in yeast.</title>
        <authorList>
            <person name="Ghaemmaghami S."/>
            <person name="Huh W.-K."/>
            <person name="Bower K."/>
            <person name="Howson R.W."/>
            <person name="Belle A."/>
            <person name="Dephoure N."/>
            <person name="O'Shea E.K."/>
            <person name="Weissman J.S."/>
        </authorList>
    </citation>
    <scope>LEVEL OF PROTEIN EXPRESSION [LARGE SCALE ANALYSIS]</scope>
</reference>
<reference key="9">
    <citation type="journal article" date="2003" name="Nat. Biotechnol.">
        <title>A proteomics approach to understanding protein ubiquitination.</title>
        <authorList>
            <person name="Peng J."/>
            <person name="Schwartz D."/>
            <person name="Elias J.E."/>
            <person name="Thoreen C.C."/>
            <person name="Cheng D."/>
            <person name="Marsischky G."/>
            <person name="Roelofs J."/>
            <person name="Finley D."/>
            <person name="Gygi S.P."/>
        </authorList>
    </citation>
    <scope>UBIQUITINATION [LARGE SCALE ANALYSIS] AT LYS-324 AND LYS-344</scope>
    <scope>IDENTIFICATION BY MASS SPECTROMETRY</scope>
    <source>
        <strain>SUB592</strain>
    </source>
</reference>
<reference key="10">
    <citation type="journal article" date="2005" name="J. Lipid Res.">
        <title>Erg28p is a key protein in the yeast sterol biosynthetic enzyme complex.</title>
        <authorList>
            <person name="Mo C."/>
            <person name="Bard M."/>
        </authorList>
    </citation>
    <scope>FUNCTION</scope>
    <scope>INTERACTION WITH ERG28</scope>
</reference>
<reference key="11">
    <citation type="journal article" date="2006" name="Proc. Natl. Acad. Sci. U.S.A.">
        <title>A global topology map of the Saccharomyces cerevisiae membrane proteome.</title>
        <authorList>
            <person name="Kim H."/>
            <person name="Melen K."/>
            <person name="Oesterberg M."/>
            <person name="von Heijne G."/>
        </authorList>
    </citation>
    <scope>TOPOLOGY [LARGE SCALE ANALYSIS]</scope>
    <source>
        <strain>ATCC 208353 / W303-1A</strain>
    </source>
</reference>
<reference key="12">
    <citation type="journal article" date="2020" name="Genes (Basel)">
        <title>Regulation of ergosterol biosynthesis in Saccharomyces cerevisiae.</title>
        <authorList>
            <person name="Jorda T."/>
            <person name="Puig S."/>
        </authorList>
    </citation>
    <scope>REVIEW ON ERGOSTEROL BIOSYNTHESIS</scope>
</reference>
<reference key="13">
    <citation type="journal article" date="2023" name="Sci. Rep.">
        <title>Yeast lacking the sterol C-5 desaturase Erg3 are tolerant to the anti-inflammatory triterpenoid saponin escin.</title>
        <authorList>
            <person name="Johnston E.J."/>
            <person name="Tallis J."/>
            <person name="Cunningham-Oakes E."/>
            <person name="Moses T."/>
            <person name="Moore S.J."/>
            <person name="Hosking S."/>
            <person name="Rosser S.J."/>
        </authorList>
    </citation>
    <scope>BIOTECHNOLOGY</scope>
    <scope>DISRUPTION PHENOTYPE</scope>
</reference>
<name>ERG3_YEAST</name>
<protein>
    <recommendedName>
        <fullName evidence="9">Delta(7)-sterol 5(6)-desaturase ERG3</fullName>
        <ecNumber evidence="6">1.14.19.20</ecNumber>
    </recommendedName>
    <alternativeName>
        <fullName evidence="9">C-5 sterol desaturase ERG3</fullName>
    </alternativeName>
    <alternativeName>
        <fullName evidence="9">Ergosterol Delta(5,6) desaturase ERG3</fullName>
    </alternativeName>
    <alternativeName>
        <fullName evidence="9">Ergosterol biosynthetic protein 3</fullName>
    </alternativeName>
    <alternativeName>
        <fullName evidence="9">Sterol-C5-desaturase</fullName>
    </alternativeName>
</protein>
<evidence type="ECO:0000250" key="1">
    <source>
        <dbReference type="UniProtKB" id="P53045"/>
    </source>
</evidence>
<evidence type="ECO:0000255" key="2"/>
<evidence type="ECO:0000269" key="3">
    <source>
    </source>
</evidence>
<evidence type="ECO:0000269" key="4">
    <source>
    </source>
</evidence>
<evidence type="ECO:0000269" key="5">
    <source>
    </source>
</evidence>
<evidence type="ECO:0000269" key="6">
    <source>
    </source>
</evidence>
<evidence type="ECO:0000269" key="7">
    <source>
    </source>
</evidence>
<evidence type="ECO:0000269" key="8">
    <source>
    </source>
</evidence>
<evidence type="ECO:0000303" key="9">
    <source>
    </source>
</evidence>
<evidence type="ECO:0000303" key="10">
    <source>
    </source>
</evidence>
<evidence type="ECO:0000305" key="11"/>